<name>ARGP_SALPC</name>
<sequence>MKRPDYRTLQALDAVIRERGFERAAQKLCITQSAVSQRIKQLENMFGQPLLVRTVPPRPTEQGQKLLALLRQVELLEEEWLGDEQTGSTPLLLSLAVNADSLATWLLPALAPVLADSPIRLNLQVEDETRTQERLRRGEVVGAVSIQHQALPSCLVDKLGALDYLFVASKPFAERYFPNGVTRSSLLKAPAVAFDHLDDMHQAFLQQNFDLPPGSVPCHIVNSSEAFVQLARQGTTCCMIPHLQIEKELESGELINLTPGLLQRRMLYWHRFAPESRMMRKVTDALLEYGHKVLRQD</sequence>
<gene>
    <name evidence="1" type="primary">argP</name>
    <name type="synonym">iciA</name>
    <name type="ordered locus">SPC_3125</name>
</gene>
<evidence type="ECO:0000255" key="1">
    <source>
        <dbReference type="HAMAP-Rule" id="MF_00513"/>
    </source>
</evidence>
<evidence type="ECO:0000305" key="2"/>
<keyword id="KW-0238">DNA-binding</keyword>
<keyword id="KW-0804">Transcription</keyword>
<keyword id="KW-0805">Transcription regulation</keyword>
<protein>
    <recommendedName>
        <fullName evidence="1">HTH-type transcriptional regulator ArgP</fullName>
    </recommendedName>
</protein>
<proteinExistence type="inferred from homology"/>
<organism>
    <name type="scientific">Salmonella paratyphi C (strain RKS4594)</name>
    <dbReference type="NCBI Taxonomy" id="476213"/>
    <lineage>
        <taxon>Bacteria</taxon>
        <taxon>Pseudomonadati</taxon>
        <taxon>Pseudomonadota</taxon>
        <taxon>Gammaproteobacteria</taxon>
        <taxon>Enterobacterales</taxon>
        <taxon>Enterobacteriaceae</taxon>
        <taxon>Salmonella</taxon>
    </lineage>
</organism>
<dbReference type="EMBL" id="CP000857">
    <property type="protein sequence ID" value="ACN47212.1"/>
    <property type="molecule type" value="Genomic_DNA"/>
</dbReference>
<dbReference type="RefSeq" id="WP_000828345.1">
    <property type="nucleotide sequence ID" value="NC_012125.1"/>
</dbReference>
<dbReference type="SMR" id="C0PY38"/>
<dbReference type="GeneID" id="66757362"/>
<dbReference type="KEGG" id="sei:SPC_3125"/>
<dbReference type="HOGENOM" id="CLU_063829_0_0_6"/>
<dbReference type="Proteomes" id="UP000001599">
    <property type="component" value="Chromosome"/>
</dbReference>
<dbReference type="GO" id="GO:0003677">
    <property type="term" value="F:DNA binding"/>
    <property type="evidence" value="ECO:0007669"/>
    <property type="project" value="UniProtKB-UniRule"/>
</dbReference>
<dbReference type="GO" id="GO:0003700">
    <property type="term" value="F:DNA-binding transcription factor activity"/>
    <property type="evidence" value="ECO:0007669"/>
    <property type="project" value="UniProtKB-UniRule"/>
</dbReference>
<dbReference type="CDD" id="cd08428">
    <property type="entry name" value="PBP2_IciA_ArgP"/>
    <property type="match status" value="1"/>
</dbReference>
<dbReference type="FunFam" id="1.10.10.10:FF:000061">
    <property type="entry name" value="HTH-type transcriptional regulator ArgP"/>
    <property type="match status" value="1"/>
</dbReference>
<dbReference type="FunFam" id="3.40.190.290:FF:000002">
    <property type="entry name" value="HTH-type transcriptional regulator ArgP"/>
    <property type="match status" value="1"/>
</dbReference>
<dbReference type="Gene3D" id="3.40.190.290">
    <property type="match status" value="1"/>
</dbReference>
<dbReference type="Gene3D" id="1.10.10.10">
    <property type="entry name" value="Winged helix-like DNA-binding domain superfamily/Winged helix DNA-binding domain"/>
    <property type="match status" value="1"/>
</dbReference>
<dbReference type="HAMAP" id="MF_00513">
    <property type="entry name" value="HTH_type_ArgP"/>
    <property type="match status" value="1"/>
</dbReference>
<dbReference type="InterPro" id="IPR017685">
    <property type="entry name" value="ArgP"/>
</dbReference>
<dbReference type="InterPro" id="IPR023490">
    <property type="entry name" value="ArgP_gammaproteobact"/>
</dbReference>
<dbReference type="InterPro" id="IPR050176">
    <property type="entry name" value="LTTR"/>
</dbReference>
<dbReference type="InterPro" id="IPR005119">
    <property type="entry name" value="LysR_subst-bd"/>
</dbReference>
<dbReference type="InterPro" id="IPR000847">
    <property type="entry name" value="Tscrpt_reg_HTH_LysR"/>
</dbReference>
<dbReference type="InterPro" id="IPR036388">
    <property type="entry name" value="WH-like_DNA-bd_sf"/>
</dbReference>
<dbReference type="InterPro" id="IPR036390">
    <property type="entry name" value="WH_DNA-bd_sf"/>
</dbReference>
<dbReference type="NCBIfam" id="TIGR03298">
    <property type="entry name" value="argP"/>
    <property type="match status" value="1"/>
</dbReference>
<dbReference type="NCBIfam" id="NF002964">
    <property type="entry name" value="PRK03635.1"/>
    <property type="match status" value="1"/>
</dbReference>
<dbReference type="NCBIfam" id="NF009888">
    <property type="entry name" value="PRK13348.1"/>
    <property type="match status" value="1"/>
</dbReference>
<dbReference type="PANTHER" id="PTHR30579:SF2">
    <property type="entry name" value="HTH-TYPE TRANSCRIPTIONAL REGULATOR ARGP"/>
    <property type="match status" value="1"/>
</dbReference>
<dbReference type="PANTHER" id="PTHR30579">
    <property type="entry name" value="TRANSCRIPTIONAL REGULATOR"/>
    <property type="match status" value="1"/>
</dbReference>
<dbReference type="Pfam" id="PF00126">
    <property type="entry name" value="HTH_1"/>
    <property type="match status" value="1"/>
</dbReference>
<dbReference type="Pfam" id="PF03466">
    <property type="entry name" value="LysR_substrate"/>
    <property type="match status" value="1"/>
</dbReference>
<dbReference type="PRINTS" id="PR00039">
    <property type="entry name" value="HTHLYSR"/>
</dbReference>
<dbReference type="SUPFAM" id="SSF53850">
    <property type="entry name" value="Periplasmic binding protein-like II"/>
    <property type="match status" value="1"/>
</dbReference>
<dbReference type="SUPFAM" id="SSF46785">
    <property type="entry name" value="Winged helix' DNA-binding domain"/>
    <property type="match status" value="1"/>
</dbReference>
<dbReference type="PROSITE" id="PS50931">
    <property type="entry name" value="HTH_LYSR"/>
    <property type="match status" value="1"/>
</dbReference>
<comment type="function">
    <text evidence="1">Controls the transcription of genes involved in arginine and lysine metabolism.</text>
</comment>
<comment type="subunit">
    <text evidence="1">Homodimer.</text>
</comment>
<comment type="similarity">
    <text evidence="2">Belongs to the LysR transcriptional regulatory family.</text>
</comment>
<accession>C0PY38</accession>
<feature type="chain" id="PRO_1000146109" description="HTH-type transcriptional regulator ArgP">
    <location>
        <begin position="1"/>
        <end position="297"/>
    </location>
</feature>
<feature type="domain" description="HTH lysR-type" evidence="1">
    <location>
        <begin position="4"/>
        <end position="60"/>
    </location>
</feature>
<feature type="DNA-binding region" description="H-T-H motif" evidence="1">
    <location>
        <begin position="21"/>
        <end position="40"/>
    </location>
</feature>
<reference key="1">
    <citation type="journal article" date="2009" name="PLoS ONE">
        <title>Salmonella paratyphi C: genetic divergence from Salmonella choleraesuis and pathogenic convergence with Salmonella typhi.</title>
        <authorList>
            <person name="Liu W.-Q."/>
            <person name="Feng Y."/>
            <person name="Wang Y."/>
            <person name="Zou Q.-H."/>
            <person name="Chen F."/>
            <person name="Guo J.-T."/>
            <person name="Peng Y.-H."/>
            <person name="Jin Y."/>
            <person name="Li Y.-G."/>
            <person name="Hu S.-N."/>
            <person name="Johnston R.N."/>
            <person name="Liu G.-R."/>
            <person name="Liu S.-L."/>
        </authorList>
    </citation>
    <scope>NUCLEOTIDE SEQUENCE [LARGE SCALE GENOMIC DNA]</scope>
    <source>
        <strain>RKS4594</strain>
    </source>
</reference>